<comment type="function">
    <text evidence="1">Probable ATPase of unknown function. Its presence in a non-photosynthetic plant (Epifagus virginiana) and experiments in tobacco indicate that it has an essential function which is probably not related to photosynthesis.</text>
</comment>
<comment type="subcellular location">
    <subcellularLocation>
        <location evidence="1">Plastid</location>
        <location evidence="1">Chloroplast stroma</location>
    </subcellularLocation>
</comment>
<comment type="similarity">
    <text evidence="1">Belongs to the Ycf2 family.</text>
</comment>
<sequence>MKRHQFKSWIFEFREILREIKNSHYFLDSWIKFDSVGSFTHIFFHQERFMKLFDPRILSILLSRDSQDSTSNRYFTIKGVVLLVVAVLISRINNRKMVERKNLYLMGLLPIPILPIRMNSIGHRNETLEESFWSSNINRLIVSLLYLPKGKKISESCFMDPRESTWVLPINQKCIMPESNRGSRWWSNRIGKKRDSSCKISNETVAGIEISFKEKDSKYLEFLFLSYTDDRIRKDPDWELFDRLSLRKKRNIINLNSGQLFEILGKDLVCYLMSAFREKRPIEGEGFFKQQGAEATIQSNDIEHVSHLFLFSRNKWGISLQNCAQFHMWQFRQDLFVSWGKNRHESDFLRNVSRENLIWLDNVWLVNKDRFFSKVRNVSSNIQYDSTGSIFVQVTDSSQLKGSSDQSRDCFDSIRNEDSEYHKLIDQTEIQQLKERSILWDPSFSQTERTEIESDRFPKCLFGSSSMSPLFTEREKPINNHLLPEEEEIEEFLGNPTRSIRSFFSDKWSELHLGSNPTERSTRDQKFLKKKQDVSFVPSRRSENKEMVDIFKIITYLQNTVSIHPISSDPGCDMVVPKDEPDMDSSNKISFLNKNPFLDLFHLFYDRNNGGYTLRHDFESEERFQEMADLFTLSITEPDLVYHRGFAFSIDSYGLDQKKLLNRVFNSRDESKKKSLLVLPPLFYEENESFYRRIRKKSVRIYCGNYLEDPKLKIVVFASNNIMEAVNKYRLIRNMIQIQYNTYGYIRNVSNRFFLMNRSDRNYEYGIQKDQIGNDTLNHITIMKYTINQHLSNLKKSQKKWFDPLFSRTERSINLDPDAYRYKWSNGNNNFQEHLEHFVSEQGNHFQVVFDRLGINQYSIDWSKAIDKQDFSKSLRFFLSKALLFFSKSLRFFLSKTLPFFFVSIGNIPIHRSEIHIYELKGTNDQLCNQLLESIGVQIVHLNKLKPFLLDDHDTSQRPKFLINGRTILPFLFNKIPKWMIDSFHTRNNRRKSFDNTDSYFSMISHDRDNWLNPVKPFHRSSLISSFYKANRLRFLNNPHHFWFYCNKGFPFYVEKTCINNYDLTYGQFLNILFIRNKIFSLCVGKGKKTHIFLEREAILPIDSQVSDIFISNDFPKSGDETYNLYKSFHFPIRPDPFVRRAIYSIADISATPLTEEQIVHFERTSCQPFSDMNLSDSEGKNSHQYLSFNSNMGLIHTPCSEKYLPSGKRKKQSLCLKKCVDKQQMYRTFQRDSALSNLSKWNLLQTYMPWFLTSTGCKYLNFTLLDAFSDSLPILSSSPKFVSIFHDIMHGSDISWPIRQKKWWAILSQWTPISEISSKCLQNLLLSEETIHRNNESPVPLIWTHLRSTNAREFLYSILFFLLVAGYLVRIHLLFVSRASSELQTELEKIKSLMIPSYMIELRKLLYRYPTSELNSFWLKNLFRVALEQLGDSLEEIRGYASDGNMLLGRGPAYGVKSIRSKNKYLNINLIDLISIIPNPVNRITFSRNTRHLSRTSKEIYALIRKRKNVNGDWIDDKIESWVANSDSIDDDEREFLVQFSTLTTEKRIDQILLSLTHSDHLSKNDFGYQMIEQPGSIYLRYLVDIHKKSLMNYEFNRSCLAERRIFLAHYQTITYSQTSCGANSFHFRSHGKPFSLRLALSPSRGILVIGSIGTGRSYLVKYLATNSYVPFITVFPNKFLDDKPKGYLIDDIDDSNDIDLDDTDDIDIEDSDDIDNDLETELLTMTNVLTMYMTSKIDRFDITPQFELAKAMSPCIIWIPNIHDLYVNESNYLSLGLLVNYLSRDCERSSTRNILVIASTHIPQKVDPALIAPNKSNTCIKIRRLLIPQQRKHFFILSYTRGFHLEKKMFHTNGFGSITVGSNARDLVALINEALSISITQKKSIIETNTIRSALHRQTWDLRSQVRSVQDHGILFYQIGRAVAQNVLLSNCPIDPISIYMKKKSCKERDSYLYKWYFELGTSIKKLTILLYLLSCSAGSVAQDLWSPSGPDEKNGITSFGFVENDSDLVHGLLEVEGALVGFSRKEKDCSQFDNNRVTLLLRSEPRNPLDMMQNGSCSIVDQRFLYEKYESEFEEGEGALDPQQIEEDLLNHIVWAPRIWRPCGNLFDCIERTNELGFPYWARSFRDKRIIFHKENELQQKDSEFLQSGTMQYQTRDRSSKEQGFFRISQFIWDPADPFFFLFKDQPFVSVFSRREFFADEEMSKGLITSQKNPPTSIYKRWFIKNTQEKHFELLIHRQRWLRTNSSLSNRSFCSNTLSESYQYLSNLFLSNGRLLDQMTKTLLRKRWLFPDEMKHLIDVTGKRFPIP</sequence>
<evidence type="ECO:0000255" key="1">
    <source>
        <dbReference type="HAMAP-Rule" id="MF_01330"/>
    </source>
</evidence>
<gene>
    <name evidence="1" type="primary">ycf2-A</name>
</gene>
<gene>
    <name evidence="1" type="primary">ycf2-B</name>
</gene>
<accession>A9L9D9</accession>
<name>YCF2_LEMMI</name>
<protein>
    <recommendedName>
        <fullName evidence="1">Protein Ycf2</fullName>
    </recommendedName>
</protein>
<keyword id="KW-0067">ATP-binding</keyword>
<keyword id="KW-0150">Chloroplast</keyword>
<keyword id="KW-0547">Nucleotide-binding</keyword>
<keyword id="KW-0934">Plastid</keyword>
<dbReference type="EMBL" id="DQ400350">
    <property type="protein sequence ID" value="ABD48538.1"/>
    <property type="molecule type" value="Genomic_DNA"/>
</dbReference>
<dbReference type="EMBL" id="DQ400350">
    <property type="protein sequence ID" value="ABD48557.1"/>
    <property type="molecule type" value="Genomic_DNA"/>
</dbReference>
<dbReference type="GO" id="GO:0009570">
    <property type="term" value="C:chloroplast stroma"/>
    <property type="evidence" value="ECO:0007669"/>
    <property type="project" value="UniProtKB-SubCell"/>
</dbReference>
<dbReference type="GO" id="GO:0005524">
    <property type="term" value="F:ATP binding"/>
    <property type="evidence" value="ECO:0007669"/>
    <property type="project" value="UniProtKB-KW"/>
</dbReference>
<dbReference type="GO" id="GO:0016887">
    <property type="term" value="F:ATP hydrolysis activity"/>
    <property type="evidence" value="ECO:0007669"/>
    <property type="project" value="InterPro"/>
</dbReference>
<dbReference type="CDD" id="cd19505">
    <property type="entry name" value="RecA-like_Ycf2"/>
    <property type="match status" value="1"/>
</dbReference>
<dbReference type="Gene3D" id="3.40.50.300">
    <property type="entry name" value="P-loop containing nucleotide triphosphate hydrolases"/>
    <property type="match status" value="1"/>
</dbReference>
<dbReference type="HAMAP" id="MF_01330">
    <property type="entry name" value="Ycf2"/>
    <property type="match status" value="1"/>
</dbReference>
<dbReference type="InterPro" id="IPR003593">
    <property type="entry name" value="AAA+_ATPase"/>
</dbReference>
<dbReference type="InterPro" id="IPR003959">
    <property type="entry name" value="ATPase_AAA_core"/>
</dbReference>
<dbReference type="InterPro" id="IPR027417">
    <property type="entry name" value="P-loop_NTPase"/>
</dbReference>
<dbReference type="InterPro" id="IPR008543">
    <property type="entry name" value="Uncharacterised_Ycf2"/>
</dbReference>
<dbReference type="InterPro" id="IPR056777">
    <property type="entry name" value="Ycf2_N"/>
</dbReference>
<dbReference type="PANTHER" id="PTHR33078:SF89">
    <property type="entry name" value="PROTEIN YCF2"/>
    <property type="match status" value="1"/>
</dbReference>
<dbReference type="PANTHER" id="PTHR33078">
    <property type="entry name" value="PROTEIN YCF2-RELATED"/>
    <property type="match status" value="1"/>
</dbReference>
<dbReference type="Pfam" id="PF00004">
    <property type="entry name" value="AAA"/>
    <property type="match status" value="1"/>
</dbReference>
<dbReference type="Pfam" id="PF05695">
    <property type="entry name" value="Ycf2"/>
    <property type="match status" value="1"/>
</dbReference>
<dbReference type="SMART" id="SM00382">
    <property type="entry name" value="AAA"/>
    <property type="match status" value="1"/>
</dbReference>
<dbReference type="SUPFAM" id="SSF52540">
    <property type="entry name" value="P-loop containing nucleoside triphosphate hydrolases"/>
    <property type="match status" value="1"/>
</dbReference>
<reference key="1">
    <citation type="submission" date="2006-02" db="EMBL/GenBank/DDBJ databases">
        <title>Complete sequence of the duckweed (Lemna minor) chloroplast genome and analysis of structural rearrangements in plastid genomes of monocots.</title>
        <authorList>
            <person name="Mardanov A.V."/>
            <person name="Ravin N.V."/>
            <person name="Kuznetsov B.B."/>
            <person name="Kolganova T.V."/>
            <person name="Skryabin K.G."/>
        </authorList>
    </citation>
    <scope>NUCLEOTIDE SEQUENCE [LARGE SCALE GENOMIC DNA]</scope>
</reference>
<geneLocation type="chloroplast"/>
<feature type="chain" id="PRO_0000343776" description="Protein Ycf2">
    <location>
        <begin position="1"/>
        <end position="2311"/>
    </location>
</feature>
<feature type="binding site" evidence="1">
    <location>
        <begin position="1652"/>
        <end position="1659"/>
    </location>
    <ligand>
        <name>ATP</name>
        <dbReference type="ChEBI" id="CHEBI:30616"/>
    </ligand>
</feature>
<proteinExistence type="inferred from homology"/>
<organism>
    <name type="scientific">Lemna minor</name>
    <name type="common">Common duckweed</name>
    <dbReference type="NCBI Taxonomy" id="4472"/>
    <lineage>
        <taxon>Eukaryota</taxon>
        <taxon>Viridiplantae</taxon>
        <taxon>Streptophyta</taxon>
        <taxon>Embryophyta</taxon>
        <taxon>Tracheophyta</taxon>
        <taxon>Spermatophyta</taxon>
        <taxon>Magnoliopsida</taxon>
        <taxon>Liliopsida</taxon>
        <taxon>Araceae</taxon>
        <taxon>Lemnoideae</taxon>
        <taxon>Lemna</taxon>
    </lineage>
</organism>